<evidence type="ECO:0000255" key="1">
    <source>
        <dbReference type="HAMAP-Rule" id="MF_00096"/>
    </source>
</evidence>
<evidence type="ECO:0000256" key="2">
    <source>
        <dbReference type="SAM" id="MobiDB-lite"/>
    </source>
</evidence>
<sequence>MAQMHTPMMKQYLQIKAKYQDAFLFFRLGDFYEMFNEDAIKAAQELEITLTGRGQGEDRIPMCGVPYHSADSYIARLIDKGYKIAICEQVEDPKTAKGVVKREVTKVLTPGTLMNSKLLAEKENNYLLAFASEGEDGWGIARCDLSTGESDVTLIRGGSAELLQEIAASGVKEAIAPAGLEEELKAKLGEQQGFVVSYEEQEDVPKEYERLINHIQQPLLKRAYGRMLHYLLATQKQSLRHLQQVVFHPADSYLKMDVHAKRNLELVQTLRDKKKSGSLLAVIDQTVTAMGGRLLRQWIERPLVDRKAIAGRQAVVEAFLEHFFEREQLRDCLRQVYDIERLAARIAYGSVNARELVQLKRSLQNIPEIEATLEQVGLGGRWLNQSEQFADLVALMEQSLVDDPPLSLTEGGLIVDGYNEELDAYRDASRNGKQWIAELEQSEREATGIRSLKVGYNRVFGYYIEVTRANAHLLPDGRYERKQTLTNAERYITPELKEKEALILEADEKLADLEYRLFADIRKQVEAYVASLQKLAADISEMDVLAGFASVAEQNGYTKPTITESRDVAIKGGRHPVVETVIKRGSYVENDIDLTGDRDMLLITGPNMGGKSTYMRQLALTVVMAQIGSYVPAAEATLPLFDQIFTRIGAADDLASGQSTFMVEMLETKDALVKATPHSLILLDEIGRGTSTYDGMALAQAIIEYIYETIGAKTLFSTHYHELTRLADSLHTLRNVHVSAVEENGTVVFLHQVIEGAADRSYGVYVAELAGLPKQVTTRAEALLTELEHLPQRPTSASVEQPVDSAKTETAATAEEPQQLSLFPTDEETKPKQPTKKERSVLAKMAEVDVLHLTPLQALEKINEWQKQLNK</sequence>
<comment type="function">
    <text evidence="1">This protein is involved in the repair of mismatches in DNA. It is possible that it carries out the mismatch recognition step. This protein has a weak ATPase activity.</text>
</comment>
<comment type="similarity">
    <text evidence="1">Belongs to the DNA mismatch repair MutS family.</text>
</comment>
<reference key="1">
    <citation type="submission" date="2003-10" db="EMBL/GenBank/DDBJ databases">
        <title>The complete genome sequence of the alkaliphilic Bacillus clausii KSM-K16.</title>
        <authorList>
            <person name="Takaki Y."/>
            <person name="Kageyama Y."/>
            <person name="Shimamura S."/>
            <person name="Suzuki H."/>
            <person name="Nishi S."/>
            <person name="Hatada Y."/>
            <person name="Kawai S."/>
            <person name="Ito S."/>
            <person name="Horikoshi K."/>
        </authorList>
    </citation>
    <scope>NUCLEOTIDE SEQUENCE [LARGE SCALE GENOMIC DNA]</scope>
    <source>
        <strain>KSM-K16</strain>
    </source>
</reference>
<keyword id="KW-0067">ATP-binding</keyword>
<keyword id="KW-0227">DNA damage</keyword>
<keyword id="KW-0234">DNA repair</keyword>
<keyword id="KW-0238">DNA-binding</keyword>
<keyword id="KW-0547">Nucleotide-binding</keyword>
<keyword id="KW-1185">Reference proteome</keyword>
<organism>
    <name type="scientific">Shouchella clausii (strain KSM-K16)</name>
    <name type="common">Alkalihalobacillus clausii</name>
    <dbReference type="NCBI Taxonomy" id="66692"/>
    <lineage>
        <taxon>Bacteria</taxon>
        <taxon>Bacillati</taxon>
        <taxon>Bacillota</taxon>
        <taxon>Bacilli</taxon>
        <taxon>Bacillales</taxon>
        <taxon>Bacillaceae</taxon>
        <taxon>Shouchella</taxon>
    </lineage>
</organism>
<proteinExistence type="inferred from homology"/>
<name>MUTS_SHOC1</name>
<dbReference type="EMBL" id="AP006627">
    <property type="protein sequence ID" value="BAD64722.1"/>
    <property type="molecule type" value="Genomic_DNA"/>
</dbReference>
<dbReference type="RefSeq" id="WP_011247030.1">
    <property type="nucleotide sequence ID" value="NC_006582.1"/>
</dbReference>
<dbReference type="SMR" id="Q5WFY3"/>
<dbReference type="STRING" id="66692.ABC2187"/>
<dbReference type="KEGG" id="bcl:ABC2187"/>
<dbReference type="eggNOG" id="COG0249">
    <property type="taxonomic scope" value="Bacteria"/>
</dbReference>
<dbReference type="HOGENOM" id="CLU_002472_3_1_9"/>
<dbReference type="OrthoDB" id="9802448at2"/>
<dbReference type="Proteomes" id="UP000001168">
    <property type="component" value="Chromosome"/>
</dbReference>
<dbReference type="GO" id="GO:0005829">
    <property type="term" value="C:cytosol"/>
    <property type="evidence" value="ECO:0007669"/>
    <property type="project" value="TreeGrafter"/>
</dbReference>
<dbReference type="GO" id="GO:0005524">
    <property type="term" value="F:ATP binding"/>
    <property type="evidence" value="ECO:0007669"/>
    <property type="project" value="UniProtKB-UniRule"/>
</dbReference>
<dbReference type="GO" id="GO:0140664">
    <property type="term" value="F:ATP-dependent DNA damage sensor activity"/>
    <property type="evidence" value="ECO:0007669"/>
    <property type="project" value="InterPro"/>
</dbReference>
<dbReference type="GO" id="GO:0003684">
    <property type="term" value="F:damaged DNA binding"/>
    <property type="evidence" value="ECO:0007669"/>
    <property type="project" value="UniProtKB-UniRule"/>
</dbReference>
<dbReference type="GO" id="GO:0030983">
    <property type="term" value="F:mismatched DNA binding"/>
    <property type="evidence" value="ECO:0007669"/>
    <property type="project" value="InterPro"/>
</dbReference>
<dbReference type="GO" id="GO:0006298">
    <property type="term" value="P:mismatch repair"/>
    <property type="evidence" value="ECO:0007669"/>
    <property type="project" value="UniProtKB-UniRule"/>
</dbReference>
<dbReference type="CDD" id="cd03284">
    <property type="entry name" value="ABC_MutS1"/>
    <property type="match status" value="1"/>
</dbReference>
<dbReference type="FunFam" id="1.10.1420.10:FF:000007">
    <property type="entry name" value="DNA mismatch repair protein MutS"/>
    <property type="match status" value="1"/>
</dbReference>
<dbReference type="FunFam" id="3.40.1170.10:FF:000001">
    <property type="entry name" value="DNA mismatch repair protein MutS"/>
    <property type="match status" value="1"/>
</dbReference>
<dbReference type="FunFam" id="3.40.50.300:FF:000896">
    <property type="entry name" value="DNA mismatch repair protein MutS"/>
    <property type="match status" value="1"/>
</dbReference>
<dbReference type="Gene3D" id="1.10.1420.10">
    <property type="match status" value="2"/>
</dbReference>
<dbReference type="Gene3D" id="3.40.1170.10">
    <property type="entry name" value="DNA repair protein MutS, domain I"/>
    <property type="match status" value="1"/>
</dbReference>
<dbReference type="Gene3D" id="3.30.420.110">
    <property type="entry name" value="MutS, connector domain"/>
    <property type="match status" value="1"/>
</dbReference>
<dbReference type="Gene3D" id="3.40.50.300">
    <property type="entry name" value="P-loop containing nucleotide triphosphate hydrolases"/>
    <property type="match status" value="1"/>
</dbReference>
<dbReference type="HAMAP" id="MF_00096">
    <property type="entry name" value="MutS"/>
    <property type="match status" value="1"/>
</dbReference>
<dbReference type="InterPro" id="IPR005748">
    <property type="entry name" value="DNA_mismatch_repair_MutS"/>
</dbReference>
<dbReference type="InterPro" id="IPR007695">
    <property type="entry name" value="DNA_mismatch_repair_MutS-lik_N"/>
</dbReference>
<dbReference type="InterPro" id="IPR017261">
    <property type="entry name" value="DNA_mismatch_repair_MutS/MSH"/>
</dbReference>
<dbReference type="InterPro" id="IPR000432">
    <property type="entry name" value="DNA_mismatch_repair_MutS_C"/>
</dbReference>
<dbReference type="InterPro" id="IPR007861">
    <property type="entry name" value="DNA_mismatch_repair_MutS_clamp"/>
</dbReference>
<dbReference type="InterPro" id="IPR007696">
    <property type="entry name" value="DNA_mismatch_repair_MutS_core"/>
</dbReference>
<dbReference type="InterPro" id="IPR016151">
    <property type="entry name" value="DNA_mismatch_repair_MutS_N"/>
</dbReference>
<dbReference type="InterPro" id="IPR036187">
    <property type="entry name" value="DNA_mismatch_repair_MutS_sf"/>
</dbReference>
<dbReference type="InterPro" id="IPR007860">
    <property type="entry name" value="DNA_mmatch_repair_MutS_con_dom"/>
</dbReference>
<dbReference type="InterPro" id="IPR045076">
    <property type="entry name" value="MutS"/>
</dbReference>
<dbReference type="InterPro" id="IPR036678">
    <property type="entry name" value="MutS_con_dom_sf"/>
</dbReference>
<dbReference type="InterPro" id="IPR027417">
    <property type="entry name" value="P-loop_NTPase"/>
</dbReference>
<dbReference type="NCBIfam" id="TIGR01070">
    <property type="entry name" value="mutS1"/>
    <property type="match status" value="1"/>
</dbReference>
<dbReference type="NCBIfam" id="NF003810">
    <property type="entry name" value="PRK05399.1"/>
    <property type="match status" value="1"/>
</dbReference>
<dbReference type="PANTHER" id="PTHR11361:SF34">
    <property type="entry name" value="DNA MISMATCH REPAIR PROTEIN MSH1, MITOCHONDRIAL"/>
    <property type="match status" value="1"/>
</dbReference>
<dbReference type="PANTHER" id="PTHR11361">
    <property type="entry name" value="DNA MISMATCH REPAIR PROTEIN MUTS FAMILY MEMBER"/>
    <property type="match status" value="1"/>
</dbReference>
<dbReference type="Pfam" id="PF01624">
    <property type="entry name" value="MutS_I"/>
    <property type="match status" value="1"/>
</dbReference>
<dbReference type="Pfam" id="PF05188">
    <property type="entry name" value="MutS_II"/>
    <property type="match status" value="1"/>
</dbReference>
<dbReference type="Pfam" id="PF05192">
    <property type="entry name" value="MutS_III"/>
    <property type="match status" value="1"/>
</dbReference>
<dbReference type="Pfam" id="PF05190">
    <property type="entry name" value="MutS_IV"/>
    <property type="match status" value="1"/>
</dbReference>
<dbReference type="Pfam" id="PF00488">
    <property type="entry name" value="MutS_V"/>
    <property type="match status" value="1"/>
</dbReference>
<dbReference type="PIRSF" id="PIRSF037677">
    <property type="entry name" value="DNA_mis_repair_Msh6"/>
    <property type="match status" value="1"/>
</dbReference>
<dbReference type="SMART" id="SM00534">
    <property type="entry name" value="MUTSac"/>
    <property type="match status" value="1"/>
</dbReference>
<dbReference type="SMART" id="SM00533">
    <property type="entry name" value="MUTSd"/>
    <property type="match status" value="1"/>
</dbReference>
<dbReference type="SUPFAM" id="SSF55271">
    <property type="entry name" value="DNA repair protein MutS, domain I"/>
    <property type="match status" value="1"/>
</dbReference>
<dbReference type="SUPFAM" id="SSF53150">
    <property type="entry name" value="DNA repair protein MutS, domain II"/>
    <property type="match status" value="1"/>
</dbReference>
<dbReference type="SUPFAM" id="SSF48334">
    <property type="entry name" value="DNA repair protein MutS, domain III"/>
    <property type="match status" value="1"/>
</dbReference>
<dbReference type="SUPFAM" id="SSF52540">
    <property type="entry name" value="P-loop containing nucleoside triphosphate hydrolases"/>
    <property type="match status" value="1"/>
</dbReference>
<dbReference type="PROSITE" id="PS00486">
    <property type="entry name" value="DNA_MISMATCH_REPAIR_2"/>
    <property type="match status" value="1"/>
</dbReference>
<gene>
    <name evidence="1" type="primary">mutS</name>
    <name type="ordered locus">ABC2187</name>
</gene>
<accession>Q5WFY3</accession>
<feature type="chain" id="PRO_0000224346" description="DNA mismatch repair protein MutS">
    <location>
        <begin position="1"/>
        <end position="871"/>
    </location>
</feature>
<feature type="region of interest" description="Disordered" evidence="2">
    <location>
        <begin position="791"/>
        <end position="840"/>
    </location>
</feature>
<feature type="compositionally biased region" description="Basic and acidic residues" evidence="2">
    <location>
        <begin position="827"/>
        <end position="840"/>
    </location>
</feature>
<feature type="binding site" evidence="1">
    <location>
        <begin position="605"/>
        <end position="612"/>
    </location>
    <ligand>
        <name>ATP</name>
        <dbReference type="ChEBI" id="CHEBI:30616"/>
    </ligand>
</feature>
<protein>
    <recommendedName>
        <fullName evidence="1">DNA mismatch repair protein MutS</fullName>
    </recommendedName>
</protein>